<reference key="1">
    <citation type="journal article" date="2008" name="PLoS ONE">
        <title>Genome biology of Actinobacillus pleuropneumoniae JL03, an isolate of serotype 3 prevalent in China.</title>
        <authorList>
            <person name="Xu Z."/>
            <person name="Zhou Y."/>
            <person name="Li L."/>
            <person name="Zhou R."/>
            <person name="Xiao S."/>
            <person name="Wan Y."/>
            <person name="Zhang S."/>
            <person name="Wang K."/>
            <person name="Li W."/>
            <person name="Li L."/>
            <person name="Jin H."/>
            <person name="Kang M."/>
            <person name="Dalai B."/>
            <person name="Li T."/>
            <person name="Liu L."/>
            <person name="Cheng Y."/>
            <person name="Zhang L."/>
            <person name="Xu T."/>
            <person name="Zheng H."/>
            <person name="Pu S."/>
            <person name="Wang B."/>
            <person name="Gu W."/>
            <person name="Zhang X.L."/>
            <person name="Zhu G.-F."/>
            <person name="Wang S."/>
            <person name="Zhao G.-P."/>
            <person name="Chen H."/>
        </authorList>
    </citation>
    <scope>NUCLEOTIDE SEQUENCE [LARGE SCALE GENOMIC DNA]</scope>
    <source>
        <strain>JL03</strain>
    </source>
</reference>
<keyword id="KW-0413">Isomerase</keyword>
<keyword id="KW-0460">Magnesium</keyword>
<keyword id="KW-0479">Metal-binding</keyword>
<keyword id="KW-0597">Phosphoprotein</keyword>
<protein>
    <recommendedName>
        <fullName evidence="1">Phosphoglucosamine mutase</fullName>
        <ecNumber evidence="1">5.4.2.10</ecNumber>
    </recommendedName>
</protein>
<feature type="chain" id="PRO_1000201053" description="Phosphoglucosamine mutase">
    <location>
        <begin position="1"/>
        <end position="444"/>
    </location>
</feature>
<feature type="active site" description="Phosphoserine intermediate" evidence="1">
    <location>
        <position position="102"/>
    </location>
</feature>
<feature type="binding site" description="via phosphate group" evidence="1">
    <location>
        <position position="102"/>
    </location>
    <ligand>
        <name>Mg(2+)</name>
        <dbReference type="ChEBI" id="CHEBI:18420"/>
    </ligand>
</feature>
<feature type="binding site" evidence="1">
    <location>
        <position position="241"/>
    </location>
    <ligand>
        <name>Mg(2+)</name>
        <dbReference type="ChEBI" id="CHEBI:18420"/>
    </ligand>
</feature>
<feature type="binding site" evidence="1">
    <location>
        <position position="243"/>
    </location>
    <ligand>
        <name>Mg(2+)</name>
        <dbReference type="ChEBI" id="CHEBI:18420"/>
    </ligand>
</feature>
<feature type="binding site" evidence="1">
    <location>
        <position position="245"/>
    </location>
    <ligand>
        <name>Mg(2+)</name>
        <dbReference type="ChEBI" id="CHEBI:18420"/>
    </ligand>
</feature>
<feature type="modified residue" description="Phosphoserine" evidence="1">
    <location>
        <position position="102"/>
    </location>
</feature>
<comment type="function">
    <text evidence="1">Catalyzes the conversion of glucosamine-6-phosphate to glucosamine-1-phosphate.</text>
</comment>
<comment type="catalytic activity">
    <reaction evidence="1">
        <text>alpha-D-glucosamine 1-phosphate = D-glucosamine 6-phosphate</text>
        <dbReference type="Rhea" id="RHEA:23424"/>
        <dbReference type="ChEBI" id="CHEBI:58516"/>
        <dbReference type="ChEBI" id="CHEBI:58725"/>
        <dbReference type="EC" id="5.4.2.10"/>
    </reaction>
</comment>
<comment type="cofactor">
    <cofactor evidence="1">
        <name>Mg(2+)</name>
        <dbReference type="ChEBI" id="CHEBI:18420"/>
    </cofactor>
    <text evidence="1">Binds 1 Mg(2+) ion per subunit.</text>
</comment>
<comment type="PTM">
    <text evidence="1">Activated by phosphorylation.</text>
</comment>
<comment type="similarity">
    <text evidence="1">Belongs to the phosphohexose mutase family.</text>
</comment>
<gene>
    <name evidence="1" type="primary">glmM</name>
    <name type="ordered locus">APJL_1476</name>
</gene>
<organism>
    <name type="scientific">Actinobacillus pleuropneumoniae serotype 3 (strain JL03)</name>
    <dbReference type="NCBI Taxonomy" id="434271"/>
    <lineage>
        <taxon>Bacteria</taxon>
        <taxon>Pseudomonadati</taxon>
        <taxon>Pseudomonadota</taxon>
        <taxon>Gammaproteobacteria</taxon>
        <taxon>Pasteurellales</taxon>
        <taxon>Pasteurellaceae</taxon>
        <taxon>Actinobacillus</taxon>
    </lineage>
</organism>
<evidence type="ECO:0000255" key="1">
    <source>
        <dbReference type="HAMAP-Rule" id="MF_01554"/>
    </source>
</evidence>
<accession>B0BR43</accession>
<dbReference type="EC" id="5.4.2.10" evidence="1"/>
<dbReference type="EMBL" id="CP000687">
    <property type="protein sequence ID" value="ABY70028.1"/>
    <property type="molecule type" value="Genomic_DNA"/>
</dbReference>
<dbReference type="RefSeq" id="WP_005598675.1">
    <property type="nucleotide sequence ID" value="NC_010278.1"/>
</dbReference>
<dbReference type="SMR" id="B0BR43"/>
<dbReference type="GeneID" id="48599697"/>
<dbReference type="KEGG" id="apj:APJL_1476"/>
<dbReference type="HOGENOM" id="CLU_016950_7_0_6"/>
<dbReference type="Proteomes" id="UP000008547">
    <property type="component" value="Chromosome"/>
</dbReference>
<dbReference type="GO" id="GO:0005829">
    <property type="term" value="C:cytosol"/>
    <property type="evidence" value="ECO:0007669"/>
    <property type="project" value="TreeGrafter"/>
</dbReference>
<dbReference type="GO" id="GO:0000287">
    <property type="term" value="F:magnesium ion binding"/>
    <property type="evidence" value="ECO:0007669"/>
    <property type="project" value="UniProtKB-UniRule"/>
</dbReference>
<dbReference type="GO" id="GO:0008966">
    <property type="term" value="F:phosphoglucosamine mutase activity"/>
    <property type="evidence" value="ECO:0007669"/>
    <property type="project" value="UniProtKB-UniRule"/>
</dbReference>
<dbReference type="GO" id="GO:0004615">
    <property type="term" value="F:phosphomannomutase activity"/>
    <property type="evidence" value="ECO:0007669"/>
    <property type="project" value="TreeGrafter"/>
</dbReference>
<dbReference type="GO" id="GO:0005975">
    <property type="term" value="P:carbohydrate metabolic process"/>
    <property type="evidence" value="ECO:0007669"/>
    <property type="project" value="InterPro"/>
</dbReference>
<dbReference type="GO" id="GO:0009252">
    <property type="term" value="P:peptidoglycan biosynthetic process"/>
    <property type="evidence" value="ECO:0007669"/>
    <property type="project" value="TreeGrafter"/>
</dbReference>
<dbReference type="GO" id="GO:0006048">
    <property type="term" value="P:UDP-N-acetylglucosamine biosynthetic process"/>
    <property type="evidence" value="ECO:0007669"/>
    <property type="project" value="TreeGrafter"/>
</dbReference>
<dbReference type="CDD" id="cd05802">
    <property type="entry name" value="GlmM"/>
    <property type="match status" value="1"/>
</dbReference>
<dbReference type="FunFam" id="3.30.310.50:FF:000001">
    <property type="entry name" value="Phosphoglucosamine mutase"/>
    <property type="match status" value="1"/>
</dbReference>
<dbReference type="FunFam" id="3.40.120.10:FF:000001">
    <property type="entry name" value="Phosphoglucosamine mutase"/>
    <property type="match status" value="1"/>
</dbReference>
<dbReference type="FunFam" id="3.40.120.10:FF:000002">
    <property type="entry name" value="Phosphoglucosamine mutase"/>
    <property type="match status" value="1"/>
</dbReference>
<dbReference type="Gene3D" id="3.40.120.10">
    <property type="entry name" value="Alpha-D-Glucose-1,6-Bisphosphate, subunit A, domain 3"/>
    <property type="match status" value="3"/>
</dbReference>
<dbReference type="Gene3D" id="3.30.310.50">
    <property type="entry name" value="Alpha-D-phosphohexomutase, C-terminal domain"/>
    <property type="match status" value="1"/>
</dbReference>
<dbReference type="HAMAP" id="MF_01554_B">
    <property type="entry name" value="GlmM_B"/>
    <property type="match status" value="1"/>
</dbReference>
<dbReference type="InterPro" id="IPR005844">
    <property type="entry name" value="A-D-PHexomutase_a/b/a-I"/>
</dbReference>
<dbReference type="InterPro" id="IPR016055">
    <property type="entry name" value="A-D-PHexomutase_a/b/a-I/II/III"/>
</dbReference>
<dbReference type="InterPro" id="IPR005845">
    <property type="entry name" value="A-D-PHexomutase_a/b/a-II"/>
</dbReference>
<dbReference type="InterPro" id="IPR005846">
    <property type="entry name" value="A-D-PHexomutase_a/b/a-III"/>
</dbReference>
<dbReference type="InterPro" id="IPR005843">
    <property type="entry name" value="A-D-PHexomutase_C"/>
</dbReference>
<dbReference type="InterPro" id="IPR036900">
    <property type="entry name" value="A-D-PHexomutase_C_sf"/>
</dbReference>
<dbReference type="InterPro" id="IPR016066">
    <property type="entry name" value="A-D-PHexomutase_CS"/>
</dbReference>
<dbReference type="InterPro" id="IPR005841">
    <property type="entry name" value="Alpha-D-phosphohexomutase_SF"/>
</dbReference>
<dbReference type="InterPro" id="IPR006352">
    <property type="entry name" value="GlmM_bact"/>
</dbReference>
<dbReference type="InterPro" id="IPR050060">
    <property type="entry name" value="Phosphoglucosamine_mutase"/>
</dbReference>
<dbReference type="NCBIfam" id="TIGR01455">
    <property type="entry name" value="glmM"/>
    <property type="match status" value="1"/>
</dbReference>
<dbReference type="NCBIfam" id="NF008139">
    <property type="entry name" value="PRK10887.1"/>
    <property type="match status" value="1"/>
</dbReference>
<dbReference type="PANTHER" id="PTHR42946:SF1">
    <property type="entry name" value="PHOSPHOGLUCOMUTASE (ALPHA-D-GLUCOSE-1,6-BISPHOSPHATE-DEPENDENT)"/>
    <property type="match status" value="1"/>
</dbReference>
<dbReference type="PANTHER" id="PTHR42946">
    <property type="entry name" value="PHOSPHOHEXOSE MUTASE"/>
    <property type="match status" value="1"/>
</dbReference>
<dbReference type="Pfam" id="PF02878">
    <property type="entry name" value="PGM_PMM_I"/>
    <property type="match status" value="1"/>
</dbReference>
<dbReference type="Pfam" id="PF02879">
    <property type="entry name" value="PGM_PMM_II"/>
    <property type="match status" value="1"/>
</dbReference>
<dbReference type="Pfam" id="PF02880">
    <property type="entry name" value="PGM_PMM_III"/>
    <property type="match status" value="1"/>
</dbReference>
<dbReference type="Pfam" id="PF00408">
    <property type="entry name" value="PGM_PMM_IV"/>
    <property type="match status" value="1"/>
</dbReference>
<dbReference type="PRINTS" id="PR00509">
    <property type="entry name" value="PGMPMM"/>
</dbReference>
<dbReference type="SUPFAM" id="SSF55957">
    <property type="entry name" value="Phosphoglucomutase, C-terminal domain"/>
    <property type="match status" value="1"/>
</dbReference>
<dbReference type="SUPFAM" id="SSF53738">
    <property type="entry name" value="Phosphoglucomutase, first 3 domains"/>
    <property type="match status" value="3"/>
</dbReference>
<dbReference type="PROSITE" id="PS00710">
    <property type="entry name" value="PGM_PMM"/>
    <property type="match status" value="1"/>
</dbReference>
<name>GLMM_ACTPJ</name>
<sequence>MAERKYFGTDGVRGKVGQFPITPDFALKLGWAAGKILATQGTKQVLIGKDTRISGYMLESALEAGLAAAGLSAAFVGPMPTPAIAYLTRTFRAEAGIVISASHNPYYDNGIKFFSSVGEKLPDEVEEAIEALLDQPMDCVESAQLGKAMRINDAAGRYIEFCKGTFPANASLKGYKIVVDCANGATYHIAPNVMRELGAEVIEIGTKPDGLNINEKCGATDIKALQKVVVESGADVGLAYDGDGDRIMMVDHLGNKVDGDQILFIIAREALRSGKLHGGVVGTLMSNMGLEVALKHLAIPFTRANVGDRYVLEQLKEKGWKLGGENSGHIIVLDKNTTGDGIIASLEVLAAMEAHKMSLNDLARAVPLFPQVLINVRFEGGKNPLESDAVKAVAADVEKRLAGKGRILLRKSGTEPLIRVMVECEDGALAQSCAEEIVEAVKSN</sequence>
<proteinExistence type="inferred from homology"/>